<comment type="function">
    <text evidence="1">Microtubule binding protein that promotes the stabilization of dynamic microtubules. Required for mitotic spindle formation (By similarity).</text>
</comment>
<comment type="subunit">
    <text evidence="1">Interacts with microtubules.</text>
</comment>
<comment type="subcellular location">
    <subcellularLocation>
        <location evidence="1">Cytoplasm</location>
        <location evidence="1">Cytoskeleton</location>
    </subcellularLocation>
    <subcellularLocation>
        <location evidence="1">Nucleus</location>
    </subcellularLocation>
    <subcellularLocation>
        <location evidence="1">Cytoplasm</location>
        <location evidence="1">Cytoskeleton</location>
        <location evidence="1">Spindle</location>
    </subcellularLocation>
</comment>
<comment type="similarity">
    <text evidence="3">Belongs to the CLASP family.</text>
</comment>
<gene>
    <name type="primary">STU1</name>
    <name type="ordered locus">DEHA2F25872g</name>
</gene>
<feature type="chain" id="PRO_0000272288" description="Protein STU1">
    <location>
        <begin position="1"/>
        <end position="1529"/>
    </location>
</feature>
<feature type="region of interest" description="Disordered" evidence="2">
    <location>
        <begin position="266"/>
        <end position="314"/>
    </location>
</feature>
<feature type="region of interest" description="Disordered" evidence="2">
    <location>
        <begin position="617"/>
        <end position="638"/>
    </location>
</feature>
<feature type="region of interest" description="Disordered" evidence="2">
    <location>
        <begin position="651"/>
        <end position="745"/>
    </location>
</feature>
<feature type="region of interest" description="Disordered" evidence="2">
    <location>
        <begin position="1070"/>
        <end position="1090"/>
    </location>
</feature>
<feature type="compositionally biased region" description="Low complexity" evidence="2">
    <location>
        <begin position="273"/>
        <end position="290"/>
    </location>
</feature>
<feature type="compositionally biased region" description="Polar residues" evidence="2">
    <location>
        <begin position="295"/>
        <end position="308"/>
    </location>
</feature>
<feature type="compositionally biased region" description="Polar residues" evidence="2">
    <location>
        <begin position="619"/>
        <end position="634"/>
    </location>
</feature>
<feature type="compositionally biased region" description="Low complexity" evidence="2">
    <location>
        <begin position="660"/>
        <end position="674"/>
    </location>
</feature>
<feature type="compositionally biased region" description="Polar residues" evidence="2">
    <location>
        <begin position="708"/>
        <end position="723"/>
    </location>
</feature>
<organism>
    <name type="scientific">Debaryomyces hansenii (strain ATCC 36239 / CBS 767 / BCRC 21394 / JCM 1990 / NBRC 0083 / IGC 2968)</name>
    <name type="common">Yeast</name>
    <name type="synonym">Torulaspora hansenii</name>
    <dbReference type="NCBI Taxonomy" id="284592"/>
    <lineage>
        <taxon>Eukaryota</taxon>
        <taxon>Fungi</taxon>
        <taxon>Dikarya</taxon>
        <taxon>Ascomycota</taxon>
        <taxon>Saccharomycotina</taxon>
        <taxon>Pichiomycetes</taxon>
        <taxon>Debaryomycetaceae</taxon>
        <taxon>Debaryomyces</taxon>
    </lineage>
</organism>
<dbReference type="EMBL" id="CR382138">
    <property type="protein sequence ID" value="CAG89883.2"/>
    <property type="molecule type" value="Genomic_DNA"/>
</dbReference>
<dbReference type="RefSeq" id="XP_461464.2">
    <property type="nucleotide sequence ID" value="XM_461464.1"/>
</dbReference>
<dbReference type="FunCoup" id="Q6BK07">
    <property type="interactions" value="165"/>
</dbReference>
<dbReference type="STRING" id="284592.Q6BK07"/>
<dbReference type="GeneID" id="2904218"/>
<dbReference type="KEGG" id="dha:DEHA2F25872g"/>
<dbReference type="VEuPathDB" id="FungiDB:DEHA2F25872g"/>
<dbReference type="eggNOG" id="ENOG502QT5T">
    <property type="taxonomic scope" value="Eukaryota"/>
</dbReference>
<dbReference type="HOGENOM" id="CLU_261691_0_0_1"/>
<dbReference type="InParanoid" id="Q6BK07"/>
<dbReference type="OMA" id="AKECYWC"/>
<dbReference type="OrthoDB" id="46159at2759"/>
<dbReference type="Proteomes" id="UP000000599">
    <property type="component" value="Chromosome F"/>
</dbReference>
<dbReference type="GO" id="GO:0005881">
    <property type="term" value="C:cytoplasmic microtubule"/>
    <property type="evidence" value="ECO:0007669"/>
    <property type="project" value="TreeGrafter"/>
</dbReference>
<dbReference type="GO" id="GO:0005815">
    <property type="term" value="C:microtubule organizing center"/>
    <property type="evidence" value="ECO:0007669"/>
    <property type="project" value="TreeGrafter"/>
</dbReference>
<dbReference type="GO" id="GO:1990023">
    <property type="term" value="C:mitotic spindle midzone"/>
    <property type="evidence" value="ECO:0007669"/>
    <property type="project" value="TreeGrafter"/>
</dbReference>
<dbReference type="GO" id="GO:0005634">
    <property type="term" value="C:nucleus"/>
    <property type="evidence" value="ECO:0007669"/>
    <property type="project" value="UniProtKB-SubCell"/>
</dbReference>
<dbReference type="GO" id="GO:0005876">
    <property type="term" value="C:spindle microtubule"/>
    <property type="evidence" value="ECO:0007669"/>
    <property type="project" value="TreeGrafter"/>
</dbReference>
<dbReference type="GO" id="GO:0008017">
    <property type="term" value="F:microtubule binding"/>
    <property type="evidence" value="ECO:0007669"/>
    <property type="project" value="TreeGrafter"/>
</dbReference>
<dbReference type="GO" id="GO:0060172">
    <property type="term" value="P:astral microtubule depolymerization"/>
    <property type="evidence" value="ECO:0007669"/>
    <property type="project" value="TreeGrafter"/>
</dbReference>
<dbReference type="GO" id="GO:0051301">
    <property type="term" value="P:cell division"/>
    <property type="evidence" value="ECO:0007669"/>
    <property type="project" value="UniProtKB-KW"/>
</dbReference>
<dbReference type="GO" id="GO:0090307">
    <property type="term" value="P:mitotic spindle assembly"/>
    <property type="evidence" value="ECO:0007669"/>
    <property type="project" value="TreeGrafter"/>
</dbReference>
<dbReference type="Gene3D" id="1.25.10.10">
    <property type="entry name" value="Leucine-rich Repeat Variant"/>
    <property type="match status" value="2"/>
</dbReference>
<dbReference type="InterPro" id="IPR011989">
    <property type="entry name" value="ARM-like"/>
</dbReference>
<dbReference type="InterPro" id="IPR016024">
    <property type="entry name" value="ARM-type_fold"/>
</dbReference>
<dbReference type="InterPro" id="IPR024395">
    <property type="entry name" value="CLASP_N_dom"/>
</dbReference>
<dbReference type="InterPro" id="IPR034085">
    <property type="entry name" value="TOG"/>
</dbReference>
<dbReference type="PANTHER" id="PTHR21567">
    <property type="entry name" value="CLASP"/>
    <property type="match status" value="1"/>
</dbReference>
<dbReference type="PANTHER" id="PTHR21567:SF9">
    <property type="entry name" value="CLIP-ASSOCIATING PROTEIN"/>
    <property type="match status" value="1"/>
</dbReference>
<dbReference type="Pfam" id="PF12348">
    <property type="entry name" value="CLASP_N"/>
    <property type="match status" value="2"/>
</dbReference>
<dbReference type="SMART" id="SM01349">
    <property type="entry name" value="TOG"/>
    <property type="match status" value="1"/>
</dbReference>
<dbReference type="SUPFAM" id="SSF48371">
    <property type="entry name" value="ARM repeat"/>
    <property type="match status" value="2"/>
</dbReference>
<proteinExistence type="inferred from homology"/>
<evidence type="ECO:0000250" key="1"/>
<evidence type="ECO:0000256" key="2">
    <source>
        <dbReference type="SAM" id="MobiDB-lite"/>
    </source>
</evidence>
<evidence type="ECO:0000305" key="3"/>
<keyword id="KW-0131">Cell cycle</keyword>
<keyword id="KW-0132">Cell division</keyword>
<keyword id="KW-0963">Cytoplasm</keyword>
<keyword id="KW-0206">Cytoskeleton</keyword>
<keyword id="KW-0493">Microtubule</keyword>
<keyword id="KW-0498">Mitosis</keyword>
<keyword id="KW-0539">Nucleus</keyword>
<keyword id="KW-1185">Reference proteome</keyword>
<reference key="1">
    <citation type="journal article" date="2004" name="Nature">
        <title>Genome evolution in yeasts.</title>
        <authorList>
            <person name="Dujon B."/>
            <person name="Sherman D."/>
            <person name="Fischer G."/>
            <person name="Durrens P."/>
            <person name="Casaregola S."/>
            <person name="Lafontaine I."/>
            <person name="de Montigny J."/>
            <person name="Marck C."/>
            <person name="Neuveglise C."/>
            <person name="Talla E."/>
            <person name="Goffard N."/>
            <person name="Frangeul L."/>
            <person name="Aigle M."/>
            <person name="Anthouard V."/>
            <person name="Babour A."/>
            <person name="Barbe V."/>
            <person name="Barnay S."/>
            <person name="Blanchin S."/>
            <person name="Beckerich J.-M."/>
            <person name="Beyne E."/>
            <person name="Bleykasten C."/>
            <person name="Boisrame A."/>
            <person name="Boyer J."/>
            <person name="Cattolico L."/>
            <person name="Confanioleri F."/>
            <person name="de Daruvar A."/>
            <person name="Despons L."/>
            <person name="Fabre E."/>
            <person name="Fairhead C."/>
            <person name="Ferry-Dumazet H."/>
            <person name="Groppi A."/>
            <person name="Hantraye F."/>
            <person name="Hennequin C."/>
            <person name="Jauniaux N."/>
            <person name="Joyet P."/>
            <person name="Kachouri R."/>
            <person name="Kerrest A."/>
            <person name="Koszul R."/>
            <person name="Lemaire M."/>
            <person name="Lesur I."/>
            <person name="Ma L."/>
            <person name="Muller H."/>
            <person name="Nicaud J.-M."/>
            <person name="Nikolski M."/>
            <person name="Oztas S."/>
            <person name="Ozier-Kalogeropoulos O."/>
            <person name="Pellenz S."/>
            <person name="Potier S."/>
            <person name="Richard G.-F."/>
            <person name="Straub M.-L."/>
            <person name="Suleau A."/>
            <person name="Swennen D."/>
            <person name="Tekaia F."/>
            <person name="Wesolowski-Louvel M."/>
            <person name="Westhof E."/>
            <person name="Wirth B."/>
            <person name="Zeniou-Meyer M."/>
            <person name="Zivanovic Y."/>
            <person name="Bolotin-Fukuhara M."/>
            <person name="Thierry A."/>
            <person name="Bouchier C."/>
            <person name="Caudron B."/>
            <person name="Scarpelli C."/>
            <person name="Gaillardin C."/>
            <person name="Weissenbach J."/>
            <person name="Wincker P."/>
            <person name="Souciet J.-L."/>
        </authorList>
    </citation>
    <scope>NUCLEOTIDE SEQUENCE [LARGE SCALE GENOMIC DNA]</scope>
    <source>
        <strain>ATCC 36239 / CBS 767 / BCRC 21394 / JCM 1990 / NBRC 0083 / IGC 2968</strain>
    </source>
</reference>
<accession>Q6BK07</accession>
<name>STU1_DEBHA</name>
<protein>
    <recommendedName>
        <fullName>Protein STU1</fullName>
    </recommendedName>
</protein>
<sequence length="1529" mass="172469">MSSQVISASRLYQIVASPTSDNDAKSRSINELKTHVKKDFVDIKQVPKYVEALSIAVDISDTGISTSSFSVLSHLVKRVSMQDSSGEVLKSQSYLVLPIIINRLGDIKASARISAKKALEAYWFSAPKEVEDSIIDIAFSHKNSKVINESIIWLDHIITNVNPHFKINLFLPHIVKLLRLNSDSDEVLIENIKTLFKDYYSLKHNRLYKFDLSKEFDTQKIPSNVHESIISQIGTSSSILMKQATPDIGLDHNFISAGTTRVTVNSMGRDKGTISSNSSTPASLSSSTMSRPKSRTNFHNYTKSISPSQEDEQITKPSVHNSAFNKYNTNQMSAPAKPVAMVNENSNEINSEISPEIEKIIAKTFTYKIDSSILPLDVKDVDDLCGTINELLPIFEGKETEFNWGMREKNIIKLRSIIRGNSSRLFTNELTSYLKESSESICKAVTSLRTTLSSHGCHFLKECAIILKEHFDPLVDSYVPHLMKLCSATKHIASSNANMALCAIFINVPYNYRLLHKILVSANEKNVQPRSYSGIWLQVVLVRFHDTSSFSYRGSNSISGLDTSIKILTKLLADPNPNVRQVAKDTYWCFWDKFPSEAESLLTRLDTNVVKAIERSKPRTITSRNQPSTLSSLTARKARPSIKESIIARNKELRKQKDQTSISRPSSRINSTSSPCPPDNDYLQKHDKPQFSTLDSGKFSRLGVAKRTPSTSSLSRVESNQDAITRKVSDSVSSNAKKHNDSQGINADAQIQNIETMKSTYSVDDNSSNRTNMEQTNKFESFDKQSDPILKFLSSNQKEFITEGINLLKYAIMGEEDLSSEVNGLLKKISVRNQDLLKPLFLSTDNLFKKTYQFFSFEDFFRVCCILIHTIDTRLVDLIVSIAGVDDIYESAIKLISYTTNLGNIIDDSDLTMQIIRFKSIIVRSIIEFLNQGLDKIPISDSYFSKLVTNLFELVSLVKSTGLYKSFCELLIKLYSINPTLFTSELQMIATSTREEVEYVVGIDDVLDLNRGHAINFTTQYELTRVVPGNNLRKMSPLKAPSDLTMVVPVEKELFEDDNIDIDSKIQSESANDTGFRTPPKLAGNHTSPIHSERSTIIETDGNISDNVEEYVNDAMDVDQNPSEEIVNGLKNDIEMHNDDNKVKEKTSNDMSDSLPLIDESDNIFVEIDSDSASRKPDLFTKFAQHDNSSELVENFAQVKITELSKQRLRNNDPIKKFIDKVDPLNKISLKNKPISIYEDVNFKGSPQKVKDYSYTELNWFNFQLAKLAMDKEDNQEIDYCIEDFKSLCDNLSSKKIEGKEFVSVLNYLQNIQISNAEFSRYFQSSGHSLIENSLWNFFDNHINLPVSKKLSGLILLKQLLINRLRVSLDRLWNLLVGLSSESSSSVDELSLAISEAFDEMLAGLFSSEIIFARILTTLENAVLERESFSLPFILECLSKVLSTNAVSLLIDEKLIMRIDNVLSGFMNDEEVEIRRCVISSYGKLLKASRISSSIETNEDIRSEYSVMDDILKKLSIPQKKLIEYYSQS</sequence>